<evidence type="ECO:0000250" key="1"/>
<evidence type="ECO:0000255" key="2">
    <source>
        <dbReference type="HAMAP-Rule" id="MF_00065"/>
    </source>
</evidence>
<proteinExistence type="inferred from homology"/>
<protein>
    <recommendedName>
        <fullName evidence="2">Adenylyl-sulfate kinase</fullName>
        <ecNumber evidence="2">2.7.1.25</ecNumber>
    </recommendedName>
    <alternativeName>
        <fullName evidence="2">APS kinase</fullName>
    </alternativeName>
    <alternativeName>
        <fullName evidence="2">ATP adenosine-5'-phosphosulfate 3'-phosphotransferase</fullName>
    </alternativeName>
    <alternativeName>
        <fullName evidence="2">Adenosine-5'-phosphosulfate kinase</fullName>
    </alternativeName>
</protein>
<feature type="initiator methionine" description="Removed" evidence="1">
    <location>
        <position position="1"/>
    </location>
</feature>
<feature type="chain" id="PRO_0000105916" description="Adenylyl-sulfate kinase">
    <location>
        <begin position="2"/>
        <end position="201"/>
    </location>
</feature>
<feature type="active site" description="Phosphoserine intermediate" evidence="2">
    <location>
        <position position="109"/>
    </location>
</feature>
<feature type="binding site" evidence="2">
    <location>
        <begin position="35"/>
        <end position="42"/>
    </location>
    <ligand>
        <name>ATP</name>
        <dbReference type="ChEBI" id="CHEBI:30616"/>
    </ligand>
</feature>
<dbReference type="EC" id="2.7.1.25" evidence="2"/>
<dbReference type="EMBL" id="AE006468">
    <property type="protein sequence ID" value="AAL21813.1"/>
    <property type="molecule type" value="Genomic_DNA"/>
</dbReference>
<dbReference type="RefSeq" id="NP_461854.1">
    <property type="nucleotide sequence ID" value="NC_003197.2"/>
</dbReference>
<dbReference type="RefSeq" id="WP_001173663.1">
    <property type="nucleotide sequence ID" value="NC_003197.2"/>
</dbReference>
<dbReference type="SMR" id="P63889"/>
<dbReference type="STRING" id="99287.STM2933"/>
<dbReference type="PaxDb" id="99287-STM2933"/>
<dbReference type="GeneID" id="1254456"/>
<dbReference type="KEGG" id="stm:STM2933"/>
<dbReference type="PATRIC" id="fig|99287.12.peg.3087"/>
<dbReference type="HOGENOM" id="CLU_046932_1_0_6"/>
<dbReference type="OMA" id="HENTVEE"/>
<dbReference type="PhylomeDB" id="P63889"/>
<dbReference type="BioCyc" id="SENT99287:STM2933-MONOMER"/>
<dbReference type="UniPathway" id="UPA00140">
    <property type="reaction ID" value="UER00205"/>
</dbReference>
<dbReference type="Proteomes" id="UP000001014">
    <property type="component" value="Chromosome"/>
</dbReference>
<dbReference type="GO" id="GO:0004020">
    <property type="term" value="F:adenylylsulfate kinase activity"/>
    <property type="evidence" value="ECO:0000318"/>
    <property type="project" value="GO_Central"/>
</dbReference>
<dbReference type="GO" id="GO:0005524">
    <property type="term" value="F:ATP binding"/>
    <property type="evidence" value="ECO:0007669"/>
    <property type="project" value="UniProtKB-UniRule"/>
</dbReference>
<dbReference type="GO" id="GO:0070814">
    <property type="term" value="P:hydrogen sulfide biosynthetic process"/>
    <property type="evidence" value="ECO:0007669"/>
    <property type="project" value="UniProtKB-UniRule"/>
</dbReference>
<dbReference type="GO" id="GO:0000103">
    <property type="term" value="P:sulfate assimilation"/>
    <property type="evidence" value="ECO:0000318"/>
    <property type="project" value="GO_Central"/>
</dbReference>
<dbReference type="CDD" id="cd02027">
    <property type="entry name" value="APSK"/>
    <property type="match status" value="1"/>
</dbReference>
<dbReference type="FunFam" id="3.40.50.300:FF:000212">
    <property type="entry name" value="Adenylyl-sulfate kinase"/>
    <property type="match status" value="1"/>
</dbReference>
<dbReference type="Gene3D" id="3.40.50.300">
    <property type="entry name" value="P-loop containing nucleotide triphosphate hydrolases"/>
    <property type="match status" value="1"/>
</dbReference>
<dbReference type="HAMAP" id="MF_00065">
    <property type="entry name" value="Adenylyl_sulf_kinase"/>
    <property type="match status" value="1"/>
</dbReference>
<dbReference type="InterPro" id="IPR002891">
    <property type="entry name" value="APS_kinase"/>
</dbReference>
<dbReference type="InterPro" id="IPR027417">
    <property type="entry name" value="P-loop_NTPase"/>
</dbReference>
<dbReference type="NCBIfam" id="TIGR00455">
    <property type="entry name" value="apsK"/>
    <property type="match status" value="1"/>
</dbReference>
<dbReference type="NCBIfam" id="NF003013">
    <property type="entry name" value="PRK03846.1"/>
    <property type="match status" value="1"/>
</dbReference>
<dbReference type="PANTHER" id="PTHR11055:SF63">
    <property type="entry name" value="ADENYLYL-SULFATE KINASE 1, CHLOROPLASTIC"/>
    <property type="match status" value="1"/>
</dbReference>
<dbReference type="PANTHER" id="PTHR11055">
    <property type="entry name" value="BIFUNCTIONAL 3'-PHOSPHOADENOSINE 5'-PHOSPHOSULFATE SYNTHASE"/>
    <property type="match status" value="1"/>
</dbReference>
<dbReference type="Pfam" id="PF01583">
    <property type="entry name" value="APS_kinase"/>
    <property type="match status" value="1"/>
</dbReference>
<dbReference type="SUPFAM" id="SSF52540">
    <property type="entry name" value="P-loop containing nucleoside triphosphate hydrolases"/>
    <property type="match status" value="1"/>
</dbReference>
<organism>
    <name type="scientific">Salmonella typhimurium (strain LT2 / SGSC1412 / ATCC 700720)</name>
    <dbReference type="NCBI Taxonomy" id="99287"/>
    <lineage>
        <taxon>Bacteria</taxon>
        <taxon>Pseudomonadati</taxon>
        <taxon>Pseudomonadota</taxon>
        <taxon>Gammaproteobacteria</taxon>
        <taxon>Enterobacterales</taxon>
        <taxon>Enterobacteriaceae</taxon>
        <taxon>Salmonella</taxon>
    </lineage>
</organism>
<accession>P63889</accession>
<accession>Q8XF34</accession>
<reference key="1">
    <citation type="journal article" date="2001" name="Nature">
        <title>Complete genome sequence of Salmonella enterica serovar Typhimurium LT2.</title>
        <authorList>
            <person name="McClelland M."/>
            <person name="Sanderson K.E."/>
            <person name="Spieth J."/>
            <person name="Clifton S.W."/>
            <person name="Latreille P."/>
            <person name="Courtney L."/>
            <person name="Porwollik S."/>
            <person name="Ali J."/>
            <person name="Dante M."/>
            <person name="Du F."/>
            <person name="Hou S."/>
            <person name="Layman D."/>
            <person name="Leonard S."/>
            <person name="Nguyen C."/>
            <person name="Scott K."/>
            <person name="Holmes A."/>
            <person name="Grewal N."/>
            <person name="Mulvaney E."/>
            <person name="Ryan E."/>
            <person name="Sun H."/>
            <person name="Florea L."/>
            <person name="Miller W."/>
            <person name="Stoneking T."/>
            <person name="Nhan M."/>
            <person name="Waterston R."/>
            <person name="Wilson R.K."/>
        </authorList>
    </citation>
    <scope>NUCLEOTIDE SEQUENCE [LARGE SCALE GENOMIC DNA]</scope>
    <source>
        <strain>LT2 / SGSC1412 / ATCC 700720</strain>
    </source>
</reference>
<name>CYSC_SALTY</name>
<keyword id="KW-0067">ATP-binding</keyword>
<keyword id="KW-0418">Kinase</keyword>
<keyword id="KW-0547">Nucleotide-binding</keyword>
<keyword id="KW-0597">Phosphoprotein</keyword>
<keyword id="KW-1185">Reference proteome</keyword>
<keyword id="KW-0808">Transferase</keyword>
<sequence>MALHDENVVWHSHPVTVAAREQLHGHRGVVLWFTGLSGSGKSTVAGALEEALHQRGVSTYLLDGDNVRHGLCRDLGFSDADRQENIRRVGEVASLMADAGLIVLTAFISPHRAERQLVKERVGHDRFIEIYVNTPLAICEQRDPKGLYKKARAGELRNFTGIDAIYEAPDSPQVHLNGEQLVTNLVSQLLDLLRRRDIIRS</sequence>
<comment type="function">
    <text evidence="2">Catalyzes the synthesis of activated sulfate.</text>
</comment>
<comment type="catalytic activity">
    <reaction evidence="2">
        <text>adenosine 5'-phosphosulfate + ATP = 3'-phosphoadenylyl sulfate + ADP + H(+)</text>
        <dbReference type="Rhea" id="RHEA:24152"/>
        <dbReference type="ChEBI" id="CHEBI:15378"/>
        <dbReference type="ChEBI" id="CHEBI:30616"/>
        <dbReference type="ChEBI" id="CHEBI:58243"/>
        <dbReference type="ChEBI" id="CHEBI:58339"/>
        <dbReference type="ChEBI" id="CHEBI:456216"/>
        <dbReference type="EC" id="2.7.1.25"/>
    </reaction>
</comment>
<comment type="pathway">
    <text evidence="2">Sulfur metabolism; hydrogen sulfide biosynthesis; sulfite from sulfate: step 2/3.</text>
</comment>
<comment type="similarity">
    <text evidence="2">Belongs to the APS kinase family.</text>
</comment>
<gene>
    <name evidence="2" type="primary">cysC</name>
    <name type="ordered locus">STM2933</name>
</gene>